<sequence length="444" mass="51212">MYISKSFIPILKNNPSEAKIKSHQLMLRVGMIKQSSAGIYSWLPLGFKVMKKIEQIVREEQNKIGAQEILMPTIQPSDIWKESGRYDDYGDEMLRIKDRQGREMLYGPTNEELVTDIFRSSVKSYKSLPQLLYHIQWKFRDEVRPRFGIMRGREFYMKDAYSFDVNDEDATFSYNKFFFSYLKTFKRLELSAIPMAADTGPIGGNLSHEFIILADTGESKIFTDKRVFDLGSEGTVLDRQSLQDLRKKYEQYYAVADEKFNKNEFEEKVSEENRLITKGIEVGHIFYFGDKYSKALNAAVDLPGGKKDFVKMGSYGIGVSRLVGAIIEAKYDQKDEIMKWPFSVAPYELAIIPMINKNDTSALDKANKLFKHFESKNIDTIIDDMDENLSSKIKKFNLIGVPYQIILGKNSEDNLLEFKEIGKDPKSLTLDQITQILTEQKLKN</sequence>
<name>SYP_PELUB</name>
<evidence type="ECO:0000255" key="1">
    <source>
        <dbReference type="HAMAP-Rule" id="MF_01570"/>
    </source>
</evidence>
<reference key="1">
    <citation type="journal article" date="2005" name="Science">
        <title>Genome streamlining in a cosmopolitan oceanic bacterium.</title>
        <authorList>
            <person name="Giovannoni S.J."/>
            <person name="Tripp H.J."/>
            <person name="Givan S."/>
            <person name="Podar M."/>
            <person name="Vergin K.L."/>
            <person name="Baptista D."/>
            <person name="Bibbs L."/>
            <person name="Eads J."/>
            <person name="Richardson T.H."/>
            <person name="Noordewier M."/>
            <person name="Rappe M.S."/>
            <person name="Short J.M."/>
            <person name="Carrington J.C."/>
            <person name="Mathur E.J."/>
        </authorList>
    </citation>
    <scope>NUCLEOTIDE SEQUENCE [LARGE SCALE GENOMIC DNA]</scope>
    <source>
        <strain>HTCC1062</strain>
    </source>
</reference>
<protein>
    <recommendedName>
        <fullName evidence="1">Proline--tRNA ligase</fullName>
        <ecNumber evidence="1">6.1.1.15</ecNumber>
    </recommendedName>
    <alternativeName>
        <fullName evidence="1">Prolyl-tRNA synthetase</fullName>
        <shortName evidence="1">ProRS</shortName>
    </alternativeName>
</protein>
<keyword id="KW-0030">Aminoacyl-tRNA synthetase</keyword>
<keyword id="KW-0067">ATP-binding</keyword>
<keyword id="KW-0963">Cytoplasm</keyword>
<keyword id="KW-0436">Ligase</keyword>
<keyword id="KW-0547">Nucleotide-binding</keyword>
<keyword id="KW-0648">Protein biosynthesis</keyword>
<keyword id="KW-1185">Reference proteome</keyword>
<organism>
    <name type="scientific">Pelagibacter ubique (strain HTCC1062)</name>
    <dbReference type="NCBI Taxonomy" id="335992"/>
    <lineage>
        <taxon>Bacteria</taxon>
        <taxon>Pseudomonadati</taxon>
        <taxon>Pseudomonadota</taxon>
        <taxon>Alphaproteobacteria</taxon>
        <taxon>Candidatus Pelagibacterales</taxon>
        <taxon>Candidatus Pelagibacteraceae</taxon>
        <taxon>Candidatus Pelagibacter</taxon>
    </lineage>
</organism>
<proteinExistence type="inferred from homology"/>
<comment type="function">
    <text evidence="1">Catalyzes the attachment of proline to tRNA(Pro) in a two-step reaction: proline is first activated by ATP to form Pro-AMP and then transferred to the acceptor end of tRNA(Pro).</text>
</comment>
<comment type="catalytic activity">
    <reaction evidence="1">
        <text>tRNA(Pro) + L-proline + ATP = L-prolyl-tRNA(Pro) + AMP + diphosphate</text>
        <dbReference type="Rhea" id="RHEA:14305"/>
        <dbReference type="Rhea" id="RHEA-COMP:9700"/>
        <dbReference type="Rhea" id="RHEA-COMP:9702"/>
        <dbReference type="ChEBI" id="CHEBI:30616"/>
        <dbReference type="ChEBI" id="CHEBI:33019"/>
        <dbReference type="ChEBI" id="CHEBI:60039"/>
        <dbReference type="ChEBI" id="CHEBI:78442"/>
        <dbReference type="ChEBI" id="CHEBI:78532"/>
        <dbReference type="ChEBI" id="CHEBI:456215"/>
        <dbReference type="EC" id="6.1.1.15"/>
    </reaction>
</comment>
<comment type="subunit">
    <text evidence="1">Homodimer.</text>
</comment>
<comment type="subcellular location">
    <subcellularLocation>
        <location evidence="1">Cytoplasm</location>
    </subcellularLocation>
</comment>
<comment type="similarity">
    <text evidence="1">Belongs to the class-II aminoacyl-tRNA synthetase family. ProS type 2 subfamily.</text>
</comment>
<gene>
    <name evidence="1" type="primary">proS</name>
    <name type="ordered locus">SAR11_0902</name>
</gene>
<feature type="chain" id="PRO_0000248905" description="Proline--tRNA ligase">
    <location>
        <begin position="1"/>
        <end position="444"/>
    </location>
</feature>
<accession>Q4FM73</accession>
<dbReference type="EC" id="6.1.1.15" evidence="1"/>
<dbReference type="EMBL" id="CP000084">
    <property type="protein sequence ID" value="AAZ21716.1"/>
    <property type="molecule type" value="Genomic_DNA"/>
</dbReference>
<dbReference type="RefSeq" id="WP_011282024.1">
    <property type="nucleotide sequence ID" value="NC_007205.1"/>
</dbReference>
<dbReference type="SMR" id="Q4FM73"/>
<dbReference type="STRING" id="335992.SAR11_0902"/>
<dbReference type="GeneID" id="66295396"/>
<dbReference type="KEGG" id="pub:SAR11_0902"/>
<dbReference type="eggNOG" id="COG0442">
    <property type="taxonomic scope" value="Bacteria"/>
</dbReference>
<dbReference type="HOGENOM" id="CLU_016739_4_2_5"/>
<dbReference type="OrthoDB" id="9809052at2"/>
<dbReference type="Proteomes" id="UP000002528">
    <property type="component" value="Chromosome"/>
</dbReference>
<dbReference type="GO" id="GO:0005829">
    <property type="term" value="C:cytosol"/>
    <property type="evidence" value="ECO:0007669"/>
    <property type="project" value="TreeGrafter"/>
</dbReference>
<dbReference type="GO" id="GO:0005524">
    <property type="term" value="F:ATP binding"/>
    <property type="evidence" value="ECO:0007669"/>
    <property type="project" value="UniProtKB-UniRule"/>
</dbReference>
<dbReference type="GO" id="GO:0004827">
    <property type="term" value="F:proline-tRNA ligase activity"/>
    <property type="evidence" value="ECO:0007669"/>
    <property type="project" value="UniProtKB-UniRule"/>
</dbReference>
<dbReference type="GO" id="GO:0006433">
    <property type="term" value="P:prolyl-tRNA aminoacylation"/>
    <property type="evidence" value="ECO:0007669"/>
    <property type="project" value="UniProtKB-UniRule"/>
</dbReference>
<dbReference type="CDD" id="cd00779">
    <property type="entry name" value="ProRS_core_prok"/>
    <property type="match status" value="1"/>
</dbReference>
<dbReference type="FunFam" id="3.30.930.10:FF:000042">
    <property type="entry name" value="probable proline--tRNA ligase, mitochondrial"/>
    <property type="match status" value="1"/>
</dbReference>
<dbReference type="Gene3D" id="3.40.50.800">
    <property type="entry name" value="Anticodon-binding domain"/>
    <property type="match status" value="1"/>
</dbReference>
<dbReference type="Gene3D" id="3.30.930.10">
    <property type="entry name" value="Bira Bifunctional Protein, Domain 2"/>
    <property type="match status" value="1"/>
</dbReference>
<dbReference type="HAMAP" id="MF_01570">
    <property type="entry name" value="Pro_tRNA_synth_type2"/>
    <property type="match status" value="1"/>
</dbReference>
<dbReference type="InterPro" id="IPR002314">
    <property type="entry name" value="aa-tRNA-synt_IIb"/>
</dbReference>
<dbReference type="InterPro" id="IPR006195">
    <property type="entry name" value="aa-tRNA-synth_II"/>
</dbReference>
<dbReference type="InterPro" id="IPR045864">
    <property type="entry name" value="aa-tRNA-synth_II/BPL/LPL"/>
</dbReference>
<dbReference type="InterPro" id="IPR004154">
    <property type="entry name" value="Anticodon-bd"/>
</dbReference>
<dbReference type="InterPro" id="IPR036621">
    <property type="entry name" value="Anticodon-bd_dom_sf"/>
</dbReference>
<dbReference type="InterPro" id="IPR002316">
    <property type="entry name" value="Pro-tRNA-ligase_IIa"/>
</dbReference>
<dbReference type="InterPro" id="IPR004500">
    <property type="entry name" value="Pro-tRNA-synth_IIa_bac-type"/>
</dbReference>
<dbReference type="InterPro" id="IPR050062">
    <property type="entry name" value="Pro-tRNA_synthetase"/>
</dbReference>
<dbReference type="InterPro" id="IPR023716">
    <property type="entry name" value="Prolyl-tRNA_ligase_IIa_type2"/>
</dbReference>
<dbReference type="InterPro" id="IPR033730">
    <property type="entry name" value="ProRS_core_prok"/>
</dbReference>
<dbReference type="NCBIfam" id="NF008979">
    <property type="entry name" value="PRK12325.1"/>
    <property type="match status" value="1"/>
</dbReference>
<dbReference type="NCBIfam" id="TIGR00409">
    <property type="entry name" value="proS_fam_II"/>
    <property type="match status" value="1"/>
</dbReference>
<dbReference type="PANTHER" id="PTHR42753">
    <property type="entry name" value="MITOCHONDRIAL RIBOSOME PROTEIN L39/PROLYL-TRNA LIGASE FAMILY MEMBER"/>
    <property type="match status" value="1"/>
</dbReference>
<dbReference type="PANTHER" id="PTHR42753:SF2">
    <property type="entry name" value="PROLINE--TRNA LIGASE"/>
    <property type="match status" value="1"/>
</dbReference>
<dbReference type="Pfam" id="PF03129">
    <property type="entry name" value="HGTP_anticodon"/>
    <property type="match status" value="1"/>
</dbReference>
<dbReference type="Pfam" id="PF00587">
    <property type="entry name" value="tRNA-synt_2b"/>
    <property type="match status" value="1"/>
</dbReference>
<dbReference type="PRINTS" id="PR01046">
    <property type="entry name" value="TRNASYNTHPRO"/>
</dbReference>
<dbReference type="SUPFAM" id="SSF52954">
    <property type="entry name" value="Class II aaRS ABD-related"/>
    <property type="match status" value="1"/>
</dbReference>
<dbReference type="SUPFAM" id="SSF55681">
    <property type="entry name" value="Class II aaRS and biotin synthetases"/>
    <property type="match status" value="1"/>
</dbReference>
<dbReference type="PROSITE" id="PS50862">
    <property type="entry name" value="AA_TRNA_LIGASE_II"/>
    <property type="match status" value="1"/>
</dbReference>